<evidence type="ECO:0000250" key="1">
    <source>
        <dbReference type="UniProtKB" id="P15222"/>
    </source>
</evidence>
<evidence type="ECO:0000250" key="2">
    <source>
        <dbReference type="UniProtKB" id="Q9UAD0"/>
    </source>
</evidence>
<evidence type="ECO:0000255" key="3">
    <source>
        <dbReference type="PROSITE-ProRule" id="PRU00545"/>
    </source>
</evidence>
<evidence type="ECO:0000269" key="4">
    <source>
    </source>
</evidence>
<evidence type="ECO:0000269" key="5">
    <source>
    </source>
</evidence>
<evidence type="ECO:0000303" key="6">
    <source>
    </source>
</evidence>
<evidence type="ECO:0000303" key="7">
    <source>
    </source>
</evidence>
<evidence type="ECO:0000305" key="8">
    <source>
    </source>
</evidence>
<evidence type="ECO:0000305" key="9">
    <source>
    </source>
</evidence>
<dbReference type="PIR" id="S06667">
    <property type="entry name" value="S06667"/>
</dbReference>
<dbReference type="SMR" id="P15229"/>
<dbReference type="GO" id="GO:0005576">
    <property type="term" value="C:extracellular region"/>
    <property type="evidence" value="ECO:0007669"/>
    <property type="project" value="UniProtKB-SubCell"/>
</dbReference>
<dbReference type="GO" id="GO:0017081">
    <property type="term" value="F:chloride channel regulator activity"/>
    <property type="evidence" value="ECO:0007669"/>
    <property type="project" value="UniProtKB-KW"/>
</dbReference>
<dbReference type="GO" id="GO:0090729">
    <property type="term" value="F:toxin activity"/>
    <property type="evidence" value="ECO:0007669"/>
    <property type="project" value="UniProtKB-KW"/>
</dbReference>
<dbReference type="InterPro" id="IPR036574">
    <property type="entry name" value="Scorpion_toxin-like_sf"/>
</dbReference>
<dbReference type="InterPro" id="IPR007958">
    <property type="entry name" value="Scorpion_toxinS_Cl_inh"/>
</dbReference>
<dbReference type="Pfam" id="PF05294">
    <property type="entry name" value="Toxin_5"/>
    <property type="match status" value="1"/>
</dbReference>
<dbReference type="SUPFAM" id="SSF57095">
    <property type="entry name" value="Scorpion toxin-like"/>
    <property type="match status" value="1"/>
</dbReference>
<dbReference type="PROSITE" id="PS51200">
    <property type="entry name" value="SHORT_SCORPION_CHLORIDE"/>
    <property type="match status" value="1"/>
</dbReference>
<accession>P15229</accession>
<organism>
    <name type="scientific">Hottentotta tamulus sindicus</name>
    <name type="common">Scorpion</name>
    <name type="synonym">Buthus sindicus</name>
    <dbReference type="NCBI Taxonomy" id="42519"/>
    <lineage>
        <taxon>Eukaryota</taxon>
        <taxon>Metazoa</taxon>
        <taxon>Ecdysozoa</taxon>
        <taxon>Arthropoda</taxon>
        <taxon>Chelicerata</taxon>
        <taxon>Arachnida</taxon>
        <taxon>Scorpiones</taxon>
        <taxon>Buthida</taxon>
        <taxon>Buthoidea</taxon>
        <taxon>Buthidae</taxon>
        <taxon>Mesobuthus</taxon>
    </lineage>
</organism>
<name>CTXL1_HOTTS</name>
<feature type="peptide" id="PRO_0000044940" description="Chlorotoxin-like peptide Bs 8" evidence="4 5">
    <location>
        <begin position="1"/>
        <end position="35"/>
    </location>
</feature>
<feature type="disulfide bond" evidence="1 3">
    <location>
        <begin position="2"/>
        <end position="19"/>
    </location>
</feature>
<feature type="disulfide bond" evidence="1 3">
    <location>
        <begin position="5"/>
        <end position="28"/>
    </location>
</feature>
<feature type="disulfide bond" evidence="1 3">
    <location>
        <begin position="16"/>
        <end position="33"/>
    </location>
</feature>
<feature type="disulfide bond" evidence="1 3">
    <location>
        <begin position="20"/>
        <end position="35"/>
    </location>
</feature>
<proteinExistence type="evidence at protein level"/>
<sequence>RCKPCFTTDPQMSKKCADCCGGKGKGKCYGPQCLC</sequence>
<comment type="function">
    <text evidence="2">Toxin with unknown function in healthy organisms. On glioma cells, interacts with chloride channels (probably ClC-3/CLCN3) and MMP2 at the surface of glioma cells. This complex is then internalized via caveolae, thus inhibiting the chloride channels necessary for cell shrinkage and tumor propagation (By similarity).</text>
</comment>
<comment type="subcellular location">
    <subcellularLocation>
        <location evidence="4 5">Secreted</location>
    </subcellularLocation>
</comment>
<comment type="tissue specificity">
    <text evidence="8 9">Expressed by the venom gland.</text>
</comment>
<comment type="domain">
    <text evidence="1">The presence of a 'disulfide through disulfide knot' structurally defines this protein as a knottin.</text>
</comment>
<comment type="mass spectrometry"/>
<comment type="similarity">
    <text evidence="3">Belongs to the short scorpion toxin superfamily. Chloride channel inhibitor family.</text>
</comment>
<protein>
    <recommendedName>
        <fullName evidence="6">Chlorotoxin-like peptide Bs 8</fullName>
        <shortName evidence="6">Bs8</shortName>
    </recommendedName>
    <alternativeName>
        <fullName evidence="7">Peptide I</fullName>
    </alternativeName>
    <alternativeName>
        <fullName>Small toxin</fullName>
    </alternativeName>
</protein>
<keyword id="KW-1265">Chloride channel impairing toxin</keyword>
<keyword id="KW-0903">Direct protein sequencing</keyword>
<keyword id="KW-1015">Disulfide bond</keyword>
<keyword id="KW-0872">Ion channel impairing toxin</keyword>
<keyword id="KW-0960">Knottin</keyword>
<keyword id="KW-0964">Secreted</keyword>
<keyword id="KW-0800">Toxin</keyword>
<keyword id="KW-0870">Voltage-gated chloride channel impairing toxin</keyword>
<reference key="1">
    <citation type="journal article" date="1989" name="FEBS Lett.">
        <title>Characterization of two different peptides from the venom of the scorpion Buthus sindicus.</title>
        <authorList>
            <person name="Fazal A."/>
            <person name="Beg O.U."/>
            <person name="Shafqat J."/>
            <person name="Zaidi Z.H."/>
            <person name="Joernvall H."/>
        </authorList>
    </citation>
    <scope>PROTEIN SEQUENCE</scope>
    <scope>SUBCELLULAR LOCATION</scope>
    <source>
        <tissue>Venom</tissue>
    </source>
</reference>
<reference key="2">
    <citation type="journal article" date="1998" name="Comp. Biochem. Physiol.">
        <title>Purification and primary structure of low molecular mass peptides from scorpion (Buthus sindicus) venom.</title>
        <authorList>
            <person name="Ali S.A."/>
            <person name="Stoeva S."/>
            <person name="Schuetz J."/>
            <person name="Kayed R."/>
            <person name="Abbasi A."/>
            <person name="Zaidi Z.H."/>
            <person name="Voelter W."/>
        </authorList>
    </citation>
    <scope>PROTEIN SEQUENCE</scope>
    <scope>MASS SPECTROMETRY</scope>
    <scope>SUBCELLULAR LOCATION</scope>
    <source>
        <tissue>Venom</tissue>
    </source>
</reference>